<gene>
    <name evidence="1" type="primary">aroA</name>
    <name type="ordered locus">XNC1_1563</name>
</gene>
<name>AROA_XENNA</name>
<organism>
    <name type="scientific">Xenorhabdus nematophila (strain ATCC 19061 / DSM 3370 / CCUG 14189 / LMG 1036 / NCIMB 9965 / AN6)</name>
    <dbReference type="NCBI Taxonomy" id="406817"/>
    <lineage>
        <taxon>Bacteria</taxon>
        <taxon>Pseudomonadati</taxon>
        <taxon>Pseudomonadota</taxon>
        <taxon>Gammaproteobacteria</taxon>
        <taxon>Enterobacterales</taxon>
        <taxon>Morganellaceae</taxon>
        <taxon>Xenorhabdus</taxon>
    </lineage>
</organism>
<keyword id="KW-0028">Amino-acid biosynthesis</keyword>
<keyword id="KW-0057">Aromatic amino acid biosynthesis</keyword>
<keyword id="KW-0963">Cytoplasm</keyword>
<keyword id="KW-1185">Reference proteome</keyword>
<keyword id="KW-0808">Transferase</keyword>
<dbReference type="EC" id="2.5.1.19" evidence="1"/>
<dbReference type="EMBL" id="AY077462">
    <property type="protein sequence ID" value="AAL79610.1"/>
    <property type="molecule type" value="Genomic_DNA"/>
</dbReference>
<dbReference type="EMBL" id="FN667742">
    <property type="protein sequence ID" value="CBJ89626.1"/>
    <property type="molecule type" value="Genomic_DNA"/>
</dbReference>
<dbReference type="RefSeq" id="WP_013183921.1">
    <property type="nucleotide sequence ID" value="NC_014228.1"/>
</dbReference>
<dbReference type="SMR" id="Q8RLV9"/>
<dbReference type="STRING" id="406817.XNC1_1563"/>
<dbReference type="GeneID" id="24904088"/>
<dbReference type="KEGG" id="xne:XNC1_1563"/>
<dbReference type="eggNOG" id="COG0128">
    <property type="taxonomic scope" value="Bacteria"/>
</dbReference>
<dbReference type="HOGENOM" id="CLU_024321_0_0_6"/>
<dbReference type="UniPathway" id="UPA00053">
    <property type="reaction ID" value="UER00089"/>
</dbReference>
<dbReference type="Proteomes" id="UP000008075">
    <property type="component" value="Chromosome"/>
</dbReference>
<dbReference type="GO" id="GO:0005737">
    <property type="term" value="C:cytoplasm"/>
    <property type="evidence" value="ECO:0007669"/>
    <property type="project" value="UniProtKB-SubCell"/>
</dbReference>
<dbReference type="GO" id="GO:0003866">
    <property type="term" value="F:3-phosphoshikimate 1-carboxyvinyltransferase activity"/>
    <property type="evidence" value="ECO:0007669"/>
    <property type="project" value="UniProtKB-UniRule"/>
</dbReference>
<dbReference type="GO" id="GO:0008652">
    <property type="term" value="P:amino acid biosynthetic process"/>
    <property type="evidence" value="ECO:0007669"/>
    <property type="project" value="UniProtKB-KW"/>
</dbReference>
<dbReference type="GO" id="GO:0009073">
    <property type="term" value="P:aromatic amino acid family biosynthetic process"/>
    <property type="evidence" value="ECO:0007669"/>
    <property type="project" value="UniProtKB-KW"/>
</dbReference>
<dbReference type="GO" id="GO:0009423">
    <property type="term" value="P:chorismate biosynthetic process"/>
    <property type="evidence" value="ECO:0007669"/>
    <property type="project" value="UniProtKB-UniRule"/>
</dbReference>
<dbReference type="CDD" id="cd01556">
    <property type="entry name" value="EPSP_synthase"/>
    <property type="match status" value="1"/>
</dbReference>
<dbReference type="FunFam" id="3.65.10.10:FF:000003">
    <property type="entry name" value="3-phosphoshikimate 1-carboxyvinyltransferase"/>
    <property type="match status" value="1"/>
</dbReference>
<dbReference type="FunFam" id="3.65.10.10:FF:000004">
    <property type="entry name" value="3-phosphoshikimate 1-carboxyvinyltransferase"/>
    <property type="match status" value="1"/>
</dbReference>
<dbReference type="Gene3D" id="3.65.10.10">
    <property type="entry name" value="Enolpyruvate transferase domain"/>
    <property type="match status" value="2"/>
</dbReference>
<dbReference type="HAMAP" id="MF_00210">
    <property type="entry name" value="EPSP_synth"/>
    <property type="match status" value="1"/>
</dbReference>
<dbReference type="InterPro" id="IPR001986">
    <property type="entry name" value="Enolpyruvate_Tfrase_dom"/>
</dbReference>
<dbReference type="InterPro" id="IPR036968">
    <property type="entry name" value="Enolpyruvate_Tfrase_sf"/>
</dbReference>
<dbReference type="InterPro" id="IPR006264">
    <property type="entry name" value="EPSP_synthase"/>
</dbReference>
<dbReference type="InterPro" id="IPR023193">
    <property type="entry name" value="EPSP_synthase_CS"/>
</dbReference>
<dbReference type="InterPro" id="IPR013792">
    <property type="entry name" value="RNA3'P_cycl/enolpyr_Trfase_a/b"/>
</dbReference>
<dbReference type="NCBIfam" id="TIGR01356">
    <property type="entry name" value="aroA"/>
    <property type="match status" value="1"/>
</dbReference>
<dbReference type="PANTHER" id="PTHR21090">
    <property type="entry name" value="AROM/DEHYDROQUINATE SYNTHASE"/>
    <property type="match status" value="1"/>
</dbReference>
<dbReference type="PANTHER" id="PTHR21090:SF5">
    <property type="entry name" value="PENTAFUNCTIONAL AROM POLYPEPTIDE"/>
    <property type="match status" value="1"/>
</dbReference>
<dbReference type="Pfam" id="PF00275">
    <property type="entry name" value="EPSP_synthase"/>
    <property type="match status" value="1"/>
</dbReference>
<dbReference type="PIRSF" id="PIRSF000505">
    <property type="entry name" value="EPSPS"/>
    <property type="match status" value="1"/>
</dbReference>
<dbReference type="SUPFAM" id="SSF55205">
    <property type="entry name" value="EPT/RTPC-like"/>
    <property type="match status" value="1"/>
</dbReference>
<dbReference type="PROSITE" id="PS00104">
    <property type="entry name" value="EPSP_SYNTHASE_1"/>
    <property type="match status" value="1"/>
</dbReference>
<dbReference type="PROSITE" id="PS00885">
    <property type="entry name" value="EPSP_SYNTHASE_2"/>
    <property type="match status" value="1"/>
</dbReference>
<comment type="function">
    <text evidence="1">Catalyzes the transfer of the enolpyruvyl moiety of phosphoenolpyruvate (PEP) to the 5-hydroxyl of shikimate-3-phosphate (S3P) to produce enolpyruvyl shikimate-3-phosphate and inorganic phosphate.</text>
</comment>
<comment type="catalytic activity">
    <reaction evidence="1">
        <text>3-phosphoshikimate + phosphoenolpyruvate = 5-O-(1-carboxyvinyl)-3-phosphoshikimate + phosphate</text>
        <dbReference type="Rhea" id="RHEA:21256"/>
        <dbReference type="ChEBI" id="CHEBI:43474"/>
        <dbReference type="ChEBI" id="CHEBI:57701"/>
        <dbReference type="ChEBI" id="CHEBI:58702"/>
        <dbReference type="ChEBI" id="CHEBI:145989"/>
        <dbReference type="EC" id="2.5.1.19"/>
    </reaction>
    <physiologicalReaction direction="left-to-right" evidence="1">
        <dbReference type="Rhea" id="RHEA:21257"/>
    </physiologicalReaction>
</comment>
<comment type="pathway">
    <text evidence="1">Metabolic intermediate biosynthesis; chorismate biosynthesis; chorismate from D-erythrose 4-phosphate and phosphoenolpyruvate: step 6/7.</text>
</comment>
<comment type="subunit">
    <text evidence="1">Monomer.</text>
</comment>
<comment type="subcellular location">
    <subcellularLocation>
        <location evidence="1">Cytoplasm</location>
    </subcellularLocation>
</comment>
<comment type="similarity">
    <text evidence="1">Belongs to the EPSP synthase family.</text>
</comment>
<proteinExistence type="inferred from homology"/>
<evidence type="ECO:0000255" key="1">
    <source>
        <dbReference type="HAMAP-Rule" id="MF_00210"/>
    </source>
</evidence>
<reference key="1">
    <citation type="journal article" date="2002" name="Mol. Microbiol.">
        <title>Identification of Xenorhabdus nematophila genes required for mutualistic colonization of Steinernema carpocapsae nematodes.</title>
        <authorList>
            <person name="Heungens K."/>
            <person name="Cowles C.E."/>
            <person name="Goodrich-Blair H."/>
        </authorList>
    </citation>
    <scope>NUCLEOTIDE SEQUENCE [GENOMIC DNA]</scope>
    <source>
        <strain>ATCC 19061 / DSM 3370 / CCUG 14189 / LMG 1036 / NCIMB 9965 / AN6</strain>
    </source>
</reference>
<reference key="2">
    <citation type="journal article" date="2011" name="PLoS ONE">
        <title>The entomopathogenic bacterial endosymbionts xenorhabdus and photorhabdus: convergent lifestyles from divergent genomes.</title>
        <authorList>
            <person name="Chaston J.M."/>
            <person name="Suen G."/>
            <person name="Tucker S.L."/>
            <person name="Andersen A.W."/>
            <person name="Bhasin A."/>
            <person name="Bode E."/>
            <person name="Bode H.B."/>
            <person name="Brachmann A.O."/>
            <person name="Cowles C.E."/>
            <person name="Cowles K.N."/>
            <person name="Darby C."/>
            <person name="de Leon L."/>
            <person name="Drace K."/>
            <person name="Du Z."/>
            <person name="Givaudan A."/>
            <person name="Herbert Tran E.E."/>
            <person name="Jewell K.A."/>
            <person name="Knack J.J."/>
            <person name="Krasomil-Osterfeld K.C."/>
            <person name="Kukor R."/>
            <person name="Lanois A."/>
            <person name="Latreille P."/>
            <person name="Leimgruber N.K."/>
            <person name="Lipke C.M."/>
            <person name="Liu R."/>
            <person name="Lu X."/>
            <person name="Martens E.C."/>
            <person name="Marri P.R."/>
            <person name="Medigue C."/>
            <person name="Menard M.L."/>
            <person name="Miller N.M."/>
            <person name="Morales-Soto N."/>
            <person name="Norton S."/>
            <person name="Ogier J.C."/>
            <person name="Orchard S.S."/>
            <person name="Park D."/>
            <person name="Park Y."/>
            <person name="Qurollo B.A."/>
            <person name="Sugar D.R."/>
            <person name="Richards G.R."/>
            <person name="Rouy Z."/>
            <person name="Slominski B."/>
            <person name="Slominski K."/>
            <person name="Snyder H."/>
            <person name="Tjaden B.C."/>
            <person name="van der Hoeven R."/>
            <person name="Welch R.D."/>
            <person name="Wheeler C."/>
            <person name="Xiang B."/>
            <person name="Barbazuk B."/>
            <person name="Gaudriault S."/>
            <person name="Goodner B."/>
            <person name="Slater S.C."/>
            <person name="Forst S."/>
            <person name="Goldman B.S."/>
            <person name="Goodrich-Blair H."/>
        </authorList>
    </citation>
    <scope>NUCLEOTIDE SEQUENCE [LARGE SCALE GENOMIC DNA]</scope>
    <source>
        <strain>ATCC 19061 / DSM 3370 / CCUG 14189 / LMG 1036 / NCIMB 9965 / AN6</strain>
    </source>
</reference>
<protein>
    <recommendedName>
        <fullName evidence="1">3-phosphoshikimate 1-carboxyvinyltransferase</fullName>
        <ecNumber evidence="1">2.5.1.19</ecNumber>
    </recommendedName>
    <alternativeName>
        <fullName evidence="1">5-enolpyruvylshikimate-3-phosphate synthase</fullName>
        <shortName evidence="1">EPSP synthase</shortName>
        <shortName evidence="1">EPSPS</shortName>
    </alternativeName>
</protein>
<accession>Q8RLV9</accession>
<accession>D3VBI7</accession>
<sequence length="428" mass="46608">MQSLTLQPISRINGTINLPGSKSVSNRALLLAAFAKGTTRLTNLLDSDDIRYMLNALTALDIPYRLSADRTVCEVEGRSGNITGKSGLELFLGNAGTAMRPLAAALCLGDNEIVLTGEPRMKERPIGHLVDALRQGGAKIDYIEQENYPPLHIKGGFSGGKVTVDGSVSSQFLTALLMAAPLAVNNTEIHIQGDLVSKPYIDITLALMKSFGVTVENHQYQVFYIRGRQQYLSPGQYLVEGDASSASYFLAAAAIKGGIVRVTGIGKNSLQGDTKFANVLEQMGATIRWGDDFVECERGTLTGIDMDMNAIPDAAMTIATTALFAQGETVIRNIYNWRVKETDRLNAMATELRKVGAEVEEGLDYIRVIPPEKIQHAEIETYNDHRVAMCFSLVALSNTPVTILDPGCTAKTFPDYFNQLKKLSEYTT</sequence>
<feature type="chain" id="PRO_0000088319" description="3-phosphoshikimate 1-carboxyvinyltransferase">
    <location>
        <begin position="1"/>
        <end position="428"/>
    </location>
</feature>
<feature type="active site" description="Proton acceptor" evidence="1">
    <location>
        <position position="313"/>
    </location>
</feature>
<feature type="binding site" evidence="1">
    <location>
        <position position="22"/>
    </location>
    <ligand>
        <name>3-phosphoshikimate</name>
        <dbReference type="ChEBI" id="CHEBI:145989"/>
    </ligand>
</feature>
<feature type="binding site" evidence="1">
    <location>
        <position position="22"/>
    </location>
    <ligand>
        <name>phosphoenolpyruvate</name>
        <dbReference type="ChEBI" id="CHEBI:58702"/>
    </ligand>
</feature>
<feature type="binding site" evidence="1">
    <location>
        <position position="23"/>
    </location>
    <ligand>
        <name>3-phosphoshikimate</name>
        <dbReference type="ChEBI" id="CHEBI:145989"/>
    </ligand>
</feature>
<feature type="binding site" evidence="1">
    <location>
        <position position="27"/>
    </location>
    <ligand>
        <name>3-phosphoshikimate</name>
        <dbReference type="ChEBI" id="CHEBI:145989"/>
    </ligand>
</feature>
<feature type="binding site" evidence="1">
    <location>
        <position position="96"/>
    </location>
    <ligand>
        <name>phosphoenolpyruvate</name>
        <dbReference type="ChEBI" id="CHEBI:58702"/>
    </ligand>
</feature>
<feature type="binding site" evidence="1">
    <location>
        <position position="124"/>
    </location>
    <ligand>
        <name>phosphoenolpyruvate</name>
        <dbReference type="ChEBI" id="CHEBI:58702"/>
    </ligand>
</feature>
<feature type="binding site" evidence="1">
    <location>
        <position position="169"/>
    </location>
    <ligand>
        <name>3-phosphoshikimate</name>
        <dbReference type="ChEBI" id="CHEBI:145989"/>
    </ligand>
</feature>
<feature type="binding site" evidence="1">
    <location>
        <position position="170"/>
    </location>
    <ligand>
        <name>3-phosphoshikimate</name>
        <dbReference type="ChEBI" id="CHEBI:145989"/>
    </ligand>
</feature>
<feature type="binding site" evidence="1">
    <location>
        <position position="171"/>
    </location>
    <ligand>
        <name>3-phosphoshikimate</name>
        <dbReference type="ChEBI" id="CHEBI:145989"/>
    </ligand>
</feature>
<feature type="binding site" evidence="1">
    <location>
        <position position="171"/>
    </location>
    <ligand>
        <name>phosphoenolpyruvate</name>
        <dbReference type="ChEBI" id="CHEBI:58702"/>
    </ligand>
</feature>
<feature type="binding site" evidence="1">
    <location>
        <position position="197"/>
    </location>
    <ligand>
        <name>3-phosphoshikimate</name>
        <dbReference type="ChEBI" id="CHEBI:145989"/>
    </ligand>
</feature>
<feature type="binding site" evidence="1">
    <location>
        <position position="313"/>
    </location>
    <ligand>
        <name>3-phosphoshikimate</name>
        <dbReference type="ChEBI" id="CHEBI:145989"/>
    </ligand>
</feature>
<feature type="binding site" evidence="1">
    <location>
        <position position="336"/>
    </location>
    <ligand>
        <name>3-phosphoshikimate</name>
        <dbReference type="ChEBI" id="CHEBI:145989"/>
    </ligand>
</feature>
<feature type="binding site" evidence="1">
    <location>
        <position position="340"/>
    </location>
    <ligand>
        <name>3-phosphoshikimate</name>
        <dbReference type="ChEBI" id="CHEBI:145989"/>
    </ligand>
</feature>
<feature type="binding site" evidence="1">
    <location>
        <position position="344"/>
    </location>
    <ligand>
        <name>phosphoenolpyruvate</name>
        <dbReference type="ChEBI" id="CHEBI:58702"/>
    </ligand>
</feature>
<feature type="binding site" evidence="1">
    <location>
        <position position="386"/>
    </location>
    <ligand>
        <name>phosphoenolpyruvate</name>
        <dbReference type="ChEBI" id="CHEBI:58702"/>
    </ligand>
</feature>
<feature type="binding site" evidence="1">
    <location>
        <position position="411"/>
    </location>
    <ligand>
        <name>phosphoenolpyruvate</name>
        <dbReference type="ChEBI" id="CHEBI:58702"/>
    </ligand>
</feature>